<proteinExistence type="inferred from homology"/>
<keyword id="KW-0012">Acyltransferase</keyword>
<keyword id="KW-0133">Cell shape</keyword>
<keyword id="KW-0961">Cell wall biogenesis/degradation</keyword>
<keyword id="KW-0963">Cytoplasm</keyword>
<keyword id="KW-0460">Magnesium</keyword>
<keyword id="KW-0479">Metal-binding</keyword>
<keyword id="KW-0511">Multifunctional enzyme</keyword>
<keyword id="KW-0548">Nucleotidyltransferase</keyword>
<keyword id="KW-0573">Peptidoglycan synthesis</keyword>
<keyword id="KW-1185">Reference proteome</keyword>
<keyword id="KW-0677">Repeat</keyword>
<keyword id="KW-0808">Transferase</keyword>
<accession>Q3J6N3</accession>
<evidence type="ECO:0000255" key="1">
    <source>
        <dbReference type="HAMAP-Rule" id="MF_01631"/>
    </source>
</evidence>
<evidence type="ECO:0000256" key="2">
    <source>
        <dbReference type="SAM" id="MobiDB-lite"/>
    </source>
</evidence>
<feature type="chain" id="PRO_0000233807" description="Bifunctional protein GlmU">
    <location>
        <begin position="1"/>
        <end position="453"/>
    </location>
</feature>
<feature type="region of interest" description="Pyrophosphorylase" evidence="1">
    <location>
        <begin position="1"/>
        <end position="227"/>
    </location>
</feature>
<feature type="region of interest" description="Linker" evidence="1">
    <location>
        <begin position="228"/>
        <end position="248"/>
    </location>
</feature>
<feature type="region of interest" description="N-acetyltransferase" evidence="1">
    <location>
        <begin position="249"/>
        <end position="453"/>
    </location>
</feature>
<feature type="region of interest" description="Disordered" evidence="2">
    <location>
        <begin position="430"/>
        <end position="453"/>
    </location>
</feature>
<feature type="active site" description="Proton acceptor" evidence="1">
    <location>
        <position position="361"/>
    </location>
</feature>
<feature type="binding site" evidence="1">
    <location>
        <begin position="8"/>
        <end position="11"/>
    </location>
    <ligand>
        <name>UDP-N-acetyl-alpha-D-glucosamine</name>
        <dbReference type="ChEBI" id="CHEBI:57705"/>
    </ligand>
</feature>
<feature type="binding site" evidence="1">
    <location>
        <position position="22"/>
    </location>
    <ligand>
        <name>UDP-N-acetyl-alpha-D-glucosamine</name>
        <dbReference type="ChEBI" id="CHEBI:57705"/>
    </ligand>
</feature>
<feature type="binding site" evidence="1">
    <location>
        <position position="73"/>
    </location>
    <ligand>
        <name>UDP-N-acetyl-alpha-D-glucosamine</name>
        <dbReference type="ChEBI" id="CHEBI:57705"/>
    </ligand>
</feature>
<feature type="binding site" evidence="1">
    <location>
        <begin position="78"/>
        <end position="79"/>
    </location>
    <ligand>
        <name>UDP-N-acetyl-alpha-D-glucosamine</name>
        <dbReference type="ChEBI" id="CHEBI:57705"/>
    </ligand>
</feature>
<feature type="binding site" evidence="1">
    <location>
        <begin position="100"/>
        <end position="102"/>
    </location>
    <ligand>
        <name>UDP-N-acetyl-alpha-D-glucosamine</name>
        <dbReference type="ChEBI" id="CHEBI:57705"/>
    </ligand>
</feature>
<feature type="binding site" evidence="1">
    <location>
        <position position="102"/>
    </location>
    <ligand>
        <name>Mg(2+)</name>
        <dbReference type="ChEBI" id="CHEBI:18420"/>
    </ligand>
</feature>
<feature type="binding site" evidence="1">
    <location>
        <position position="137"/>
    </location>
    <ligand>
        <name>UDP-N-acetyl-alpha-D-glucosamine</name>
        <dbReference type="ChEBI" id="CHEBI:57705"/>
    </ligand>
</feature>
<feature type="binding site" evidence="1">
    <location>
        <position position="152"/>
    </location>
    <ligand>
        <name>UDP-N-acetyl-alpha-D-glucosamine</name>
        <dbReference type="ChEBI" id="CHEBI:57705"/>
    </ligand>
</feature>
<feature type="binding site" evidence="1">
    <location>
        <position position="167"/>
    </location>
    <ligand>
        <name>UDP-N-acetyl-alpha-D-glucosamine</name>
        <dbReference type="ChEBI" id="CHEBI:57705"/>
    </ligand>
</feature>
<feature type="binding site" evidence="1">
    <location>
        <position position="225"/>
    </location>
    <ligand>
        <name>Mg(2+)</name>
        <dbReference type="ChEBI" id="CHEBI:18420"/>
    </ligand>
</feature>
<feature type="binding site" evidence="1">
    <location>
        <position position="225"/>
    </location>
    <ligand>
        <name>UDP-N-acetyl-alpha-D-glucosamine</name>
        <dbReference type="ChEBI" id="CHEBI:57705"/>
    </ligand>
</feature>
<feature type="binding site" evidence="1">
    <location>
        <position position="331"/>
    </location>
    <ligand>
        <name>UDP-N-acetyl-alpha-D-glucosamine</name>
        <dbReference type="ChEBI" id="CHEBI:57705"/>
    </ligand>
</feature>
<feature type="binding site" evidence="1">
    <location>
        <position position="349"/>
    </location>
    <ligand>
        <name>UDP-N-acetyl-alpha-D-glucosamine</name>
        <dbReference type="ChEBI" id="CHEBI:57705"/>
    </ligand>
</feature>
<feature type="binding site" evidence="1">
    <location>
        <position position="364"/>
    </location>
    <ligand>
        <name>UDP-N-acetyl-alpha-D-glucosamine</name>
        <dbReference type="ChEBI" id="CHEBI:57705"/>
    </ligand>
</feature>
<feature type="binding site" evidence="1">
    <location>
        <position position="375"/>
    </location>
    <ligand>
        <name>UDP-N-acetyl-alpha-D-glucosamine</name>
        <dbReference type="ChEBI" id="CHEBI:57705"/>
    </ligand>
</feature>
<feature type="binding site" evidence="1">
    <location>
        <position position="378"/>
    </location>
    <ligand>
        <name>acetyl-CoA</name>
        <dbReference type="ChEBI" id="CHEBI:57288"/>
    </ligand>
</feature>
<feature type="binding site" evidence="1">
    <location>
        <begin position="384"/>
        <end position="385"/>
    </location>
    <ligand>
        <name>acetyl-CoA</name>
        <dbReference type="ChEBI" id="CHEBI:57288"/>
    </ligand>
</feature>
<feature type="binding site" evidence="1">
    <location>
        <position position="403"/>
    </location>
    <ligand>
        <name>acetyl-CoA</name>
        <dbReference type="ChEBI" id="CHEBI:57288"/>
    </ligand>
</feature>
<feature type="binding site" evidence="1">
    <location>
        <position position="421"/>
    </location>
    <ligand>
        <name>acetyl-CoA</name>
        <dbReference type="ChEBI" id="CHEBI:57288"/>
    </ligand>
</feature>
<feature type="binding site" evidence="1">
    <location>
        <position position="438"/>
    </location>
    <ligand>
        <name>acetyl-CoA</name>
        <dbReference type="ChEBI" id="CHEBI:57288"/>
    </ligand>
</feature>
<reference key="1">
    <citation type="journal article" date="2006" name="Appl. Environ. Microbiol.">
        <title>Complete genome sequence of the marine, chemolithoautotrophic, ammonia-oxidizing bacterium Nitrosococcus oceani ATCC 19707.</title>
        <authorList>
            <person name="Klotz M.G."/>
            <person name="Arp D.J."/>
            <person name="Chain P.S.G."/>
            <person name="El-Sheikh A.F."/>
            <person name="Hauser L.J."/>
            <person name="Hommes N.G."/>
            <person name="Larimer F.W."/>
            <person name="Malfatti S.A."/>
            <person name="Norton J.M."/>
            <person name="Poret-Peterson A.T."/>
            <person name="Vergez L.M."/>
            <person name="Ward B.B."/>
        </authorList>
    </citation>
    <scope>NUCLEOTIDE SEQUENCE [LARGE SCALE GENOMIC DNA]</scope>
    <source>
        <strain>ATCC 19707 / BCRC 17464 / JCM 30415 / NCIMB 11848 / C-107</strain>
    </source>
</reference>
<gene>
    <name evidence="1" type="primary">glmU</name>
    <name type="ordered locus">Noc_3072</name>
</gene>
<name>GLMU_NITOC</name>
<comment type="function">
    <text evidence="1">Catalyzes the last two sequential reactions in the de novo biosynthetic pathway for UDP-N-acetylglucosamine (UDP-GlcNAc). The C-terminal domain catalyzes the transfer of acetyl group from acetyl coenzyme A to glucosamine-1-phosphate (GlcN-1-P) to produce N-acetylglucosamine-1-phosphate (GlcNAc-1-P), which is converted into UDP-GlcNAc by the transfer of uridine 5-monophosphate (from uridine 5-triphosphate), a reaction catalyzed by the N-terminal domain.</text>
</comment>
<comment type="catalytic activity">
    <reaction evidence="1">
        <text>alpha-D-glucosamine 1-phosphate + acetyl-CoA = N-acetyl-alpha-D-glucosamine 1-phosphate + CoA + H(+)</text>
        <dbReference type="Rhea" id="RHEA:13725"/>
        <dbReference type="ChEBI" id="CHEBI:15378"/>
        <dbReference type="ChEBI" id="CHEBI:57287"/>
        <dbReference type="ChEBI" id="CHEBI:57288"/>
        <dbReference type="ChEBI" id="CHEBI:57776"/>
        <dbReference type="ChEBI" id="CHEBI:58516"/>
        <dbReference type="EC" id="2.3.1.157"/>
    </reaction>
</comment>
<comment type="catalytic activity">
    <reaction evidence="1">
        <text>N-acetyl-alpha-D-glucosamine 1-phosphate + UTP + H(+) = UDP-N-acetyl-alpha-D-glucosamine + diphosphate</text>
        <dbReference type="Rhea" id="RHEA:13509"/>
        <dbReference type="ChEBI" id="CHEBI:15378"/>
        <dbReference type="ChEBI" id="CHEBI:33019"/>
        <dbReference type="ChEBI" id="CHEBI:46398"/>
        <dbReference type="ChEBI" id="CHEBI:57705"/>
        <dbReference type="ChEBI" id="CHEBI:57776"/>
        <dbReference type="EC" id="2.7.7.23"/>
    </reaction>
</comment>
<comment type="cofactor">
    <cofactor evidence="1">
        <name>Mg(2+)</name>
        <dbReference type="ChEBI" id="CHEBI:18420"/>
    </cofactor>
    <text evidence="1">Binds 1 Mg(2+) ion per subunit.</text>
</comment>
<comment type="pathway">
    <text evidence="1">Nucleotide-sugar biosynthesis; UDP-N-acetyl-alpha-D-glucosamine biosynthesis; N-acetyl-alpha-D-glucosamine 1-phosphate from alpha-D-glucosamine 6-phosphate (route II): step 2/2.</text>
</comment>
<comment type="pathway">
    <text evidence="1">Nucleotide-sugar biosynthesis; UDP-N-acetyl-alpha-D-glucosamine biosynthesis; UDP-N-acetyl-alpha-D-glucosamine from N-acetyl-alpha-D-glucosamine 1-phosphate: step 1/1.</text>
</comment>
<comment type="pathway">
    <text evidence="1">Bacterial outer membrane biogenesis; LPS lipid A biosynthesis.</text>
</comment>
<comment type="subunit">
    <text evidence="1">Homotrimer.</text>
</comment>
<comment type="subcellular location">
    <subcellularLocation>
        <location evidence="1">Cytoplasm</location>
    </subcellularLocation>
</comment>
<comment type="similarity">
    <text evidence="1">In the N-terminal section; belongs to the N-acetylglucosamine-1-phosphate uridyltransferase family.</text>
</comment>
<comment type="similarity">
    <text evidence="1">In the C-terminal section; belongs to the transferase hexapeptide repeat family.</text>
</comment>
<protein>
    <recommendedName>
        <fullName evidence="1">Bifunctional protein GlmU</fullName>
    </recommendedName>
    <domain>
        <recommendedName>
            <fullName evidence="1">UDP-N-acetylglucosamine pyrophosphorylase</fullName>
            <ecNumber evidence="1">2.7.7.23</ecNumber>
        </recommendedName>
        <alternativeName>
            <fullName evidence="1">N-acetylglucosamine-1-phosphate uridyltransferase</fullName>
        </alternativeName>
    </domain>
    <domain>
        <recommendedName>
            <fullName evidence="1">Glucosamine-1-phosphate N-acetyltransferase</fullName>
            <ecNumber evidence="1">2.3.1.157</ecNumber>
        </recommendedName>
    </domain>
</protein>
<sequence>MAVSVIILAAGQGTRMHSTLPKVLHQLAGRPLLSHVIATARQLNPAQIIVVYGHGGETVPEAFRAADITWVRQELQLGTGHAALQTLPYIKPDTMLLILSGDVPLVKIETLKRLLAMVDQGGVGLLTVELANPNGYGRIIRDRVGGVSKIIEEADASPEQRRIREVNTGITAIEARYLKQIAPKLSNNNAQGEYYLTDIIEHAVASGEKVVAVSAADSIEVMGVNDRQQLAYLERFYQKREAARLMGEGVSLSDPDRFDLRGELLVGKDVYIDINVILEGRVILGDGVKIGPHCYLRNAVLGEGVEVLANCVIEEAAIDACARVGPFTRIRPETRLGEGVHIGNFVEIKKSTINKNSKVNHLSYIGDATIGKKVNIGAGTITCNYDGANKHHTLIEDNVFIGSDTQLIAPVKIGAGATIGAGATITHDVPPGELTLSRTPQKSWPGWKRPSKK</sequence>
<organism>
    <name type="scientific">Nitrosococcus oceani (strain ATCC 19707 / BCRC 17464 / JCM 30415 / NCIMB 11848 / C-107)</name>
    <dbReference type="NCBI Taxonomy" id="323261"/>
    <lineage>
        <taxon>Bacteria</taxon>
        <taxon>Pseudomonadati</taxon>
        <taxon>Pseudomonadota</taxon>
        <taxon>Gammaproteobacteria</taxon>
        <taxon>Chromatiales</taxon>
        <taxon>Chromatiaceae</taxon>
        <taxon>Nitrosococcus</taxon>
    </lineage>
</organism>
<dbReference type="EC" id="2.7.7.23" evidence="1"/>
<dbReference type="EC" id="2.3.1.157" evidence="1"/>
<dbReference type="EMBL" id="CP000127">
    <property type="protein sequence ID" value="ABA59513.1"/>
    <property type="molecule type" value="Genomic_DNA"/>
</dbReference>
<dbReference type="RefSeq" id="WP_002812235.1">
    <property type="nucleotide sequence ID" value="NC_007484.1"/>
</dbReference>
<dbReference type="SMR" id="Q3J6N3"/>
<dbReference type="FunCoup" id="Q3J6N3">
    <property type="interactions" value="493"/>
</dbReference>
<dbReference type="STRING" id="323261.Noc_3072"/>
<dbReference type="KEGG" id="noc:Noc_3072"/>
<dbReference type="eggNOG" id="COG1207">
    <property type="taxonomic scope" value="Bacteria"/>
</dbReference>
<dbReference type="HOGENOM" id="CLU_029499_15_2_6"/>
<dbReference type="InParanoid" id="Q3J6N3"/>
<dbReference type="UniPathway" id="UPA00113">
    <property type="reaction ID" value="UER00532"/>
</dbReference>
<dbReference type="UniPathway" id="UPA00113">
    <property type="reaction ID" value="UER00533"/>
</dbReference>
<dbReference type="UniPathway" id="UPA00973"/>
<dbReference type="Proteomes" id="UP000006838">
    <property type="component" value="Chromosome"/>
</dbReference>
<dbReference type="GO" id="GO:0005737">
    <property type="term" value="C:cytoplasm"/>
    <property type="evidence" value="ECO:0007669"/>
    <property type="project" value="UniProtKB-SubCell"/>
</dbReference>
<dbReference type="GO" id="GO:0016020">
    <property type="term" value="C:membrane"/>
    <property type="evidence" value="ECO:0007669"/>
    <property type="project" value="GOC"/>
</dbReference>
<dbReference type="GO" id="GO:0019134">
    <property type="term" value="F:glucosamine-1-phosphate N-acetyltransferase activity"/>
    <property type="evidence" value="ECO:0007669"/>
    <property type="project" value="UniProtKB-UniRule"/>
</dbReference>
<dbReference type="GO" id="GO:0000287">
    <property type="term" value="F:magnesium ion binding"/>
    <property type="evidence" value="ECO:0007669"/>
    <property type="project" value="UniProtKB-UniRule"/>
</dbReference>
<dbReference type="GO" id="GO:0003977">
    <property type="term" value="F:UDP-N-acetylglucosamine diphosphorylase activity"/>
    <property type="evidence" value="ECO:0007669"/>
    <property type="project" value="UniProtKB-UniRule"/>
</dbReference>
<dbReference type="GO" id="GO:0000902">
    <property type="term" value="P:cell morphogenesis"/>
    <property type="evidence" value="ECO:0007669"/>
    <property type="project" value="UniProtKB-UniRule"/>
</dbReference>
<dbReference type="GO" id="GO:0071555">
    <property type="term" value="P:cell wall organization"/>
    <property type="evidence" value="ECO:0007669"/>
    <property type="project" value="UniProtKB-KW"/>
</dbReference>
<dbReference type="GO" id="GO:0009245">
    <property type="term" value="P:lipid A biosynthetic process"/>
    <property type="evidence" value="ECO:0007669"/>
    <property type="project" value="UniProtKB-UniRule"/>
</dbReference>
<dbReference type="GO" id="GO:0009252">
    <property type="term" value="P:peptidoglycan biosynthetic process"/>
    <property type="evidence" value="ECO:0007669"/>
    <property type="project" value="UniProtKB-UniRule"/>
</dbReference>
<dbReference type="GO" id="GO:0008360">
    <property type="term" value="P:regulation of cell shape"/>
    <property type="evidence" value="ECO:0007669"/>
    <property type="project" value="UniProtKB-KW"/>
</dbReference>
<dbReference type="GO" id="GO:0006048">
    <property type="term" value="P:UDP-N-acetylglucosamine biosynthetic process"/>
    <property type="evidence" value="ECO:0007669"/>
    <property type="project" value="UniProtKB-UniPathway"/>
</dbReference>
<dbReference type="CDD" id="cd02540">
    <property type="entry name" value="GT2_GlmU_N_bac"/>
    <property type="match status" value="1"/>
</dbReference>
<dbReference type="CDD" id="cd03353">
    <property type="entry name" value="LbH_GlmU_C"/>
    <property type="match status" value="1"/>
</dbReference>
<dbReference type="Gene3D" id="2.160.10.10">
    <property type="entry name" value="Hexapeptide repeat proteins"/>
    <property type="match status" value="1"/>
</dbReference>
<dbReference type="Gene3D" id="3.90.550.10">
    <property type="entry name" value="Spore Coat Polysaccharide Biosynthesis Protein SpsA, Chain A"/>
    <property type="match status" value="1"/>
</dbReference>
<dbReference type="HAMAP" id="MF_01631">
    <property type="entry name" value="GlmU"/>
    <property type="match status" value="1"/>
</dbReference>
<dbReference type="InterPro" id="IPR005882">
    <property type="entry name" value="Bifunctional_GlmU"/>
</dbReference>
<dbReference type="InterPro" id="IPR050065">
    <property type="entry name" value="GlmU-like"/>
</dbReference>
<dbReference type="InterPro" id="IPR038009">
    <property type="entry name" value="GlmU_C_LbH"/>
</dbReference>
<dbReference type="InterPro" id="IPR001451">
    <property type="entry name" value="Hexapep"/>
</dbReference>
<dbReference type="InterPro" id="IPR018357">
    <property type="entry name" value="Hexapep_transf_CS"/>
</dbReference>
<dbReference type="InterPro" id="IPR025877">
    <property type="entry name" value="MobA-like_NTP_Trfase"/>
</dbReference>
<dbReference type="InterPro" id="IPR029044">
    <property type="entry name" value="Nucleotide-diphossugar_trans"/>
</dbReference>
<dbReference type="InterPro" id="IPR011004">
    <property type="entry name" value="Trimer_LpxA-like_sf"/>
</dbReference>
<dbReference type="NCBIfam" id="TIGR01173">
    <property type="entry name" value="glmU"/>
    <property type="match status" value="1"/>
</dbReference>
<dbReference type="PANTHER" id="PTHR43584:SF3">
    <property type="entry name" value="BIFUNCTIONAL PROTEIN GLMU"/>
    <property type="match status" value="1"/>
</dbReference>
<dbReference type="PANTHER" id="PTHR43584">
    <property type="entry name" value="NUCLEOTIDYL TRANSFERASE"/>
    <property type="match status" value="1"/>
</dbReference>
<dbReference type="Pfam" id="PF00132">
    <property type="entry name" value="Hexapep"/>
    <property type="match status" value="2"/>
</dbReference>
<dbReference type="Pfam" id="PF12804">
    <property type="entry name" value="NTP_transf_3"/>
    <property type="match status" value="1"/>
</dbReference>
<dbReference type="SUPFAM" id="SSF53448">
    <property type="entry name" value="Nucleotide-diphospho-sugar transferases"/>
    <property type="match status" value="1"/>
</dbReference>
<dbReference type="SUPFAM" id="SSF51161">
    <property type="entry name" value="Trimeric LpxA-like enzymes"/>
    <property type="match status" value="1"/>
</dbReference>
<dbReference type="PROSITE" id="PS00101">
    <property type="entry name" value="HEXAPEP_TRANSFERASES"/>
    <property type="match status" value="1"/>
</dbReference>